<dbReference type="EC" id="3.1.-.-" evidence="1"/>
<dbReference type="EMBL" id="CP001407">
    <property type="protein sequence ID" value="ACO28488.1"/>
    <property type="molecule type" value="Genomic_DNA"/>
</dbReference>
<dbReference type="RefSeq" id="WP_000765876.1">
    <property type="nucleotide sequence ID" value="NZ_CP009318.1"/>
</dbReference>
<dbReference type="SMR" id="C1ELD8"/>
<dbReference type="KEGG" id="bcx:BCA_1270"/>
<dbReference type="PATRIC" id="fig|572264.18.peg.1221"/>
<dbReference type="Proteomes" id="UP000002210">
    <property type="component" value="Chromosome"/>
</dbReference>
<dbReference type="GO" id="GO:0016788">
    <property type="term" value="F:hydrolase activity, acting on ester bonds"/>
    <property type="evidence" value="ECO:0007669"/>
    <property type="project" value="UniProtKB-UniRule"/>
</dbReference>
<dbReference type="Gene3D" id="3.90.1140.10">
    <property type="entry name" value="Cyclic phosphodiesterase"/>
    <property type="match status" value="1"/>
</dbReference>
<dbReference type="HAMAP" id="MF_01444">
    <property type="entry name" value="2H_phosphoesterase_YjcG"/>
    <property type="match status" value="1"/>
</dbReference>
<dbReference type="InterPro" id="IPR050580">
    <property type="entry name" value="2H_phosphoesterase_YjcG-like"/>
</dbReference>
<dbReference type="InterPro" id="IPR009097">
    <property type="entry name" value="Cyclic_Pdiesterase"/>
</dbReference>
<dbReference type="InterPro" id="IPR022932">
    <property type="entry name" value="YjcG"/>
</dbReference>
<dbReference type="NCBIfam" id="NF010223">
    <property type="entry name" value="PRK13679.1"/>
    <property type="match status" value="1"/>
</dbReference>
<dbReference type="PANTHER" id="PTHR40037:SF1">
    <property type="entry name" value="PHOSPHOESTERASE SAOUHSC_00951-RELATED"/>
    <property type="match status" value="1"/>
</dbReference>
<dbReference type="PANTHER" id="PTHR40037">
    <property type="entry name" value="PHOSPHOESTERASE YJCG-RELATED"/>
    <property type="match status" value="1"/>
</dbReference>
<dbReference type="Pfam" id="PF13563">
    <property type="entry name" value="2_5_RNA_ligase2"/>
    <property type="match status" value="1"/>
</dbReference>
<dbReference type="SUPFAM" id="SSF55144">
    <property type="entry name" value="LigT-like"/>
    <property type="match status" value="1"/>
</dbReference>
<name>Y1270_BACC3</name>
<proteinExistence type="inferred from homology"/>
<protein>
    <recommendedName>
        <fullName evidence="1">Putative phosphoesterase BCA_1270</fullName>
        <ecNumber evidence="1">3.1.-.-</ecNumber>
    </recommendedName>
</protein>
<reference key="1">
    <citation type="submission" date="2009-02" db="EMBL/GenBank/DDBJ databases">
        <title>Genome sequence of Bacillus cereus 03BB102.</title>
        <authorList>
            <person name="Dodson R.J."/>
            <person name="Jackson P."/>
            <person name="Munk A.C."/>
            <person name="Brettin T."/>
            <person name="Bruce D."/>
            <person name="Detter C."/>
            <person name="Tapia R."/>
            <person name="Han C."/>
            <person name="Sutton G."/>
            <person name="Sims D."/>
        </authorList>
    </citation>
    <scope>NUCLEOTIDE SEQUENCE [LARGE SCALE GENOMIC DNA]</scope>
    <source>
        <strain>03BB102</strain>
    </source>
</reference>
<gene>
    <name type="ordered locus">BCA_1270</name>
</gene>
<accession>C1ELD8</accession>
<comment type="similarity">
    <text evidence="1">Belongs to the 2H phosphoesterase superfamily. YjcG family.</text>
</comment>
<organism>
    <name type="scientific">Bacillus cereus (strain 03BB102)</name>
    <dbReference type="NCBI Taxonomy" id="572264"/>
    <lineage>
        <taxon>Bacteria</taxon>
        <taxon>Bacillati</taxon>
        <taxon>Bacillota</taxon>
        <taxon>Bacilli</taxon>
        <taxon>Bacillales</taxon>
        <taxon>Bacillaceae</taxon>
        <taxon>Bacillus</taxon>
        <taxon>Bacillus cereus group</taxon>
    </lineage>
</organism>
<sequence>MKLGIVIFPSKMIQDKANGLRKRYDPHYALVPPHITLKTPFETQDEQLESIVNELHTIASKTNPFTLHVGKVGSFAPVNNVIYFKVEKTPELTFLNEEMHSGFFTQEREYAFVPHLTIGQGLSDAEHADVLGRLRMKDFYYEQPIDRFHLLYQLENGTWTVHETFRLGKGNN</sequence>
<evidence type="ECO:0000255" key="1">
    <source>
        <dbReference type="HAMAP-Rule" id="MF_01444"/>
    </source>
</evidence>
<feature type="chain" id="PRO_1000184947" description="Putative phosphoesterase BCA_1270">
    <location>
        <begin position="1"/>
        <end position="172"/>
    </location>
</feature>
<feature type="short sequence motif" description="HXTX 1" evidence="1">
    <location>
        <begin position="34"/>
        <end position="37"/>
    </location>
</feature>
<feature type="short sequence motif" description="HXTX 2" evidence="1">
    <location>
        <begin position="115"/>
        <end position="118"/>
    </location>
</feature>
<feature type="active site" description="Proton donor" evidence="1">
    <location>
        <position position="34"/>
    </location>
</feature>
<feature type="active site" description="Proton acceptor" evidence="1">
    <location>
        <position position="115"/>
    </location>
</feature>
<keyword id="KW-0378">Hydrolase</keyword>